<reference key="1">
    <citation type="journal article" date="2011" name="Stand. Genomic Sci.">
        <title>Complete genome sequence of the halophilic and highly halotolerant Chromohalobacter salexigens type strain (1H11(T)).</title>
        <authorList>
            <person name="Copeland A."/>
            <person name="O'Connor K."/>
            <person name="Lucas S."/>
            <person name="Lapidus A."/>
            <person name="Berry K.W."/>
            <person name="Detter J.C."/>
            <person name="Del Rio T.G."/>
            <person name="Hammon N."/>
            <person name="Dalin E."/>
            <person name="Tice H."/>
            <person name="Pitluck S."/>
            <person name="Bruce D."/>
            <person name="Goodwin L."/>
            <person name="Han C."/>
            <person name="Tapia R."/>
            <person name="Saunders E."/>
            <person name="Schmutz J."/>
            <person name="Brettin T."/>
            <person name="Larimer F."/>
            <person name="Land M."/>
            <person name="Hauser L."/>
            <person name="Vargas C."/>
            <person name="Nieto J.J."/>
            <person name="Kyrpides N.C."/>
            <person name="Ivanova N."/>
            <person name="Goker M."/>
            <person name="Klenk H.P."/>
            <person name="Csonka L.N."/>
            <person name="Woyke T."/>
        </authorList>
    </citation>
    <scope>NUCLEOTIDE SEQUENCE [LARGE SCALE GENOMIC DNA]</scope>
    <source>
        <strain>ATCC BAA-138 / DSM 3043 / CIP 106854 / NCIMB 13768 / 1H11</strain>
    </source>
</reference>
<evidence type="ECO:0000255" key="1">
    <source>
        <dbReference type="HAMAP-Rule" id="MF_00054"/>
    </source>
</evidence>
<dbReference type="EMBL" id="CP000285">
    <property type="protein sequence ID" value="ABE57780.1"/>
    <property type="molecule type" value="Genomic_DNA"/>
</dbReference>
<dbReference type="RefSeq" id="WP_011505726.1">
    <property type="nucleotide sequence ID" value="NC_007963.1"/>
</dbReference>
<dbReference type="SMR" id="Q1R0H8"/>
<dbReference type="STRING" id="290398.Csal_0418"/>
<dbReference type="GeneID" id="95333171"/>
<dbReference type="KEGG" id="csa:Csal_0418"/>
<dbReference type="eggNOG" id="COG0480">
    <property type="taxonomic scope" value="Bacteria"/>
</dbReference>
<dbReference type="HOGENOM" id="CLU_002794_4_1_6"/>
<dbReference type="OrthoDB" id="9801472at2"/>
<dbReference type="Proteomes" id="UP000000239">
    <property type="component" value="Chromosome"/>
</dbReference>
<dbReference type="GO" id="GO:0005737">
    <property type="term" value="C:cytoplasm"/>
    <property type="evidence" value="ECO:0007669"/>
    <property type="project" value="UniProtKB-SubCell"/>
</dbReference>
<dbReference type="GO" id="GO:0005525">
    <property type="term" value="F:GTP binding"/>
    <property type="evidence" value="ECO:0007669"/>
    <property type="project" value="UniProtKB-UniRule"/>
</dbReference>
<dbReference type="GO" id="GO:0003924">
    <property type="term" value="F:GTPase activity"/>
    <property type="evidence" value="ECO:0007669"/>
    <property type="project" value="InterPro"/>
</dbReference>
<dbReference type="GO" id="GO:0097216">
    <property type="term" value="F:guanosine tetraphosphate binding"/>
    <property type="evidence" value="ECO:0007669"/>
    <property type="project" value="UniProtKB-ARBA"/>
</dbReference>
<dbReference type="GO" id="GO:0003746">
    <property type="term" value="F:translation elongation factor activity"/>
    <property type="evidence" value="ECO:0007669"/>
    <property type="project" value="UniProtKB-UniRule"/>
</dbReference>
<dbReference type="GO" id="GO:0032790">
    <property type="term" value="P:ribosome disassembly"/>
    <property type="evidence" value="ECO:0007669"/>
    <property type="project" value="TreeGrafter"/>
</dbReference>
<dbReference type="CDD" id="cd01886">
    <property type="entry name" value="EF-G"/>
    <property type="match status" value="1"/>
</dbReference>
<dbReference type="CDD" id="cd16262">
    <property type="entry name" value="EFG_III"/>
    <property type="match status" value="1"/>
</dbReference>
<dbReference type="CDD" id="cd01434">
    <property type="entry name" value="EFG_mtEFG1_IV"/>
    <property type="match status" value="1"/>
</dbReference>
<dbReference type="CDD" id="cd03713">
    <property type="entry name" value="EFG_mtEFG_C"/>
    <property type="match status" value="1"/>
</dbReference>
<dbReference type="CDD" id="cd04088">
    <property type="entry name" value="EFG_mtEFG_II"/>
    <property type="match status" value="1"/>
</dbReference>
<dbReference type="FunFam" id="2.40.30.10:FF:000006">
    <property type="entry name" value="Elongation factor G"/>
    <property type="match status" value="1"/>
</dbReference>
<dbReference type="FunFam" id="3.30.230.10:FF:000003">
    <property type="entry name" value="Elongation factor G"/>
    <property type="match status" value="1"/>
</dbReference>
<dbReference type="FunFam" id="3.30.70.240:FF:000001">
    <property type="entry name" value="Elongation factor G"/>
    <property type="match status" value="1"/>
</dbReference>
<dbReference type="FunFam" id="3.30.70.870:FF:000001">
    <property type="entry name" value="Elongation factor G"/>
    <property type="match status" value="1"/>
</dbReference>
<dbReference type="FunFam" id="3.40.50.300:FF:000029">
    <property type="entry name" value="Elongation factor G"/>
    <property type="match status" value="1"/>
</dbReference>
<dbReference type="Gene3D" id="3.30.230.10">
    <property type="match status" value="1"/>
</dbReference>
<dbReference type="Gene3D" id="3.30.70.240">
    <property type="match status" value="1"/>
</dbReference>
<dbReference type="Gene3D" id="3.30.70.870">
    <property type="entry name" value="Elongation Factor G (Translational Gtpase), domain 3"/>
    <property type="match status" value="1"/>
</dbReference>
<dbReference type="Gene3D" id="3.40.50.300">
    <property type="entry name" value="P-loop containing nucleotide triphosphate hydrolases"/>
    <property type="match status" value="1"/>
</dbReference>
<dbReference type="Gene3D" id="2.40.30.10">
    <property type="entry name" value="Translation factors"/>
    <property type="match status" value="1"/>
</dbReference>
<dbReference type="HAMAP" id="MF_00054_B">
    <property type="entry name" value="EF_G_EF_2_B"/>
    <property type="match status" value="1"/>
</dbReference>
<dbReference type="InterPro" id="IPR041095">
    <property type="entry name" value="EFG_II"/>
</dbReference>
<dbReference type="InterPro" id="IPR009022">
    <property type="entry name" value="EFG_III"/>
</dbReference>
<dbReference type="InterPro" id="IPR035647">
    <property type="entry name" value="EFG_III/V"/>
</dbReference>
<dbReference type="InterPro" id="IPR047872">
    <property type="entry name" value="EFG_IV"/>
</dbReference>
<dbReference type="InterPro" id="IPR035649">
    <property type="entry name" value="EFG_V"/>
</dbReference>
<dbReference type="InterPro" id="IPR000640">
    <property type="entry name" value="EFG_V-like"/>
</dbReference>
<dbReference type="InterPro" id="IPR004161">
    <property type="entry name" value="EFTu-like_2"/>
</dbReference>
<dbReference type="InterPro" id="IPR031157">
    <property type="entry name" value="G_TR_CS"/>
</dbReference>
<dbReference type="InterPro" id="IPR027417">
    <property type="entry name" value="P-loop_NTPase"/>
</dbReference>
<dbReference type="InterPro" id="IPR020568">
    <property type="entry name" value="Ribosomal_Su5_D2-typ_SF"/>
</dbReference>
<dbReference type="InterPro" id="IPR014721">
    <property type="entry name" value="Ribsml_uS5_D2-typ_fold_subgr"/>
</dbReference>
<dbReference type="InterPro" id="IPR005225">
    <property type="entry name" value="Small_GTP-bd"/>
</dbReference>
<dbReference type="InterPro" id="IPR000795">
    <property type="entry name" value="T_Tr_GTP-bd_dom"/>
</dbReference>
<dbReference type="InterPro" id="IPR009000">
    <property type="entry name" value="Transl_B-barrel_sf"/>
</dbReference>
<dbReference type="InterPro" id="IPR004540">
    <property type="entry name" value="Transl_elong_EFG/EF2"/>
</dbReference>
<dbReference type="InterPro" id="IPR005517">
    <property type="entry name" value="Transl_elong_EFG/EF2_IV"/>
</dbReference>
<dbReference type="NCBIfam" id="TIGR00484">
    <property type="entry name" value="EF-G"/>
    <property type="match status" value="1"/>
</dbReference>
<dbReference type="NCBIfam" id="NF009381">
    <property type="entry name" value="PRK12740.1-5"/>
    <property type="match status" value="1"/>
</dbReference>
<dbReference type="NCBIfam" id="TIGR00231">
    <property type="entry name" value="small_GTP"/>
    <property type="match status" value="1"/>
</dbReference>
<dbReference type="PANTHER" id="PTHR43261:SF1">
    <property type="entry name" value="RIBOSOME-RELEASING FACTOR 2, MITOCHONDRIAL"/>
    <property type="match status" value="1"/>
</dbReference>
<dbReference type="PANTHER" id="PTHR43261">
    <property type="entry name" value="TRANSLATION ELONGATION FACTOR G-RELATED"/>
    <property type="match status" value="1"/>
</dbReference>
<dbReference type="Pfam" id="PF00679">
    <property type="entry name" value="EFG_C"/>
    <property type="match status" value="1"/>
</dbReference>
<dbReference type="Pfam" id="PF14492">
    <property type="entry name" value="EFG_III"/>
    <property type="match status" value="1"/>
</dbReference>
<dbReference type="Pfam" id="PF03764">
    <property type="entry name" value="EFG_IV"/>
    <property type="match status" value="1"/>
</dbReference>
<dbReference type="Pfam" id="PF00009">
    <property type="entry name" value="GTP_EFTU"/>
    <property type="match status" value="1"/>
</dbReference>
<dbReference type="Pfam" id="PF03144">
    <property type="entry name" value="GTP_EFTU_D2"/>
    <property type="match status" value="1"/>
</dbReference>
<dbReference type="PRINTS" id="PR00315">
    <property type="entry name" value="ELONGATNFCT"/>
</dbReference>
<dbReference type="SMART" id="SM00838">
    <property type="entry name" value="EFG_C"/>
    <property type="match status" value="1"/>
</dbReference>
<dbReference type="SMART" id="SM00889">
    <property type="entry name" value="EFG_IV"/>
    <property type="match status" value="1"/>
</dbReference>
<dbReference type="SUPFAM" id="SSF54980">
    <property type="entry name" value="EF-G C-terminal domain-like"/>
    <property type="match status" value="2"/>
</dbReference>
<dbReference type="SUPFAM" id="SSF52540">
    <property type="entry name" value="P-loop containing nucleoside triphosphate hydrolases"/>
    <property type="match status" value="1"/>
</dbReference>
<dbReference type="SUPFAM" id="SSF54211">
    <property type="entry name" value="Ribosomal protein S5 domain 2-like"/>
    <property type="match status" value="1"/>
</dbReference>
<dbReference type="SUPFAM" id="SSF50447">
    <property type="entry name" value="Translation proteins"/>
    <property type="match status" value="1"/>
</dbReference>
<dbReference type="PROSITE" id="PS00301">
    <property type="entry name" value="G_TR_1"/>
    <property type="match status" value="1"/>
</dbReference>
<dbReference type="PROSITE" id="PS51722">
    <property type="entry name" value="G_TR_2"/>
    <property type="match status" value="1"/>
</dbReference>
<gene>
    <name evidence="1" type="primary">fusA</name>
    <name type="ordered locus">Csal_0418</name>
</gene>
<protein>
    <recommendedName>
        <fullName evidence="1">Elongation factor G</fullName>
        <shortName evidence="1">EF-G</shortName>
    </recommendedName>
</protein>
<name>EFG_CHRSD</name>
<sequence length="706" mass="77994">MARKTPLKRYRNIGIVAHVDAGKTTTTERVLFYTGLSHKVGEVHDGAATMDWMEQEQERGITITSAATTCFWQGMNKQFDEHRINIIDTPGHVDFTIEVERSLRVLDGAVVVLCGSSGVQPQTETVWRQANKYEVPRMVFVNKMDRAGADYFMVLDQLKQKLGANTVPIQINWGAEDDFKGVIDLIQMKGILWDEANHGMNYELVEIPDELKESAAKYREQMVEAAAEASEELMDKYLEEGDLSEADIKAGLRRRTLDNEIVLVTCGSAFKNKGVQAVLDGVIEYMPSPTEVKAIEGELDDKDGTIATREADDSAPFAALAFKIATDPFVGTLTFIRVYSGVLKSGDSIFNSVKSKKERVGRIVQMHSNSREEIKEVYAGDIAACIGLKDVTTGDTLCDLNDKIILERMEFPDPVISVAVEPKSKPDQEKMGTALGKLAQEDPSFRVKTDEETGQTIISGMGELHLDIIVDRLRREFKVDANIGKPQVAYRETIRASVEQEGKFVRQSGGRGQYGHVLLRIEPLTAEDKGEDEDMTFKFASEIVGGVVPKEYVPAVEKGAYEQLQNGVIAGYPMIDVKVTLFDGSYHDVDSNETAFKVASSMAIKEGAPKAKAVLLEPVMKVEVVTPEEFMGDVMGDLNRRRGLVQGMDDSPSGKIIRATVPLAEMFGYATDLRSQTQGRASYTMEFADYEEAPSSVVEAVINQNG</sequence>
<accession>Q1R0H8</accession>
<comment type="function">
    <text evidence="1">Catalyzes the GTP-dependent ribosomal translocation step during translation elongation. During this step, the ribosome changes from the pre-translocational (PRE) to the post-translocational (POST) state as the newly formed A-site-bound peptidyl-tRNA and P-site-bound deacylated tRNA move to the P and E sites, respectively. Catalyzes the coordinated movement of the two tRNA molecules, the mRNA and conformational changes in the ribosome.</text>
</comment>
<comment type="subcellular location">
    <subcellularLocation>
        <location evidence="1">Cytoplasm</location>
    </subcellularLocation>
</comment>
<comment type="similarity">
    <text evidence="1">Belongs to the TRAFAC class translation factor GTPase superfamily. Classic translation factor GTPase family. EF-G/EF-2 subfamily.</text>
</comment>
<organism>
    <name type="scientific">Chromohalobacter salexigens (strain ATCC BAA-138 / DSM 3043 / CIP 106854 / NCIMB 13768 / 1H11)</name>
    <dbReference type="NCBI Taxonomy" id="290398"/>
    <lineage>
        <taxon>Bacteria</taxon>
        <taxon>Pseudomonadati</taxon>
        <taxon>Pseudomonadota</taxon>
        <taxon>Gammaproteobacteria</taxon>
        <taxon>Oceanospirillales</taxon>
        <taxon>Halomonadaceae</taxon>
        <taxon>Chromohalobacter</taxon>
    </lineage>
</organism>
<keyword id="KW-0963">Cytoplasm</keyword>
<keyword id="KW-0251">Elongation factor</keyword>
<keyword id="KW-0342">GTP-binding</keyword>
<keyword id="KW-0547">Nucleotide-binding</keyword>
<keyword id="KW-0648">Protein biosynthesis</keyword>
<keyword id="KW-1185">Reference proteome</keyword>
<proteinExistence type="inferred from homology"/>
<feature type="chain" id="PRO_0000263440" description="Elongation factor G">
    <location>
        <begin position="1"/>
        <end position="706"/>
    </location>
</feature>
<feature type="domain" description="tr-type G">
    <location>
        <begin position="8"/>
        <end position="290"/>
    </location>
</feature>
<feature type="binding site" evidence="1">
    <location>
        <begin position="17"/>
        <end position="24"/>
    </location>
    <ligand>
        <name>GTP</name>
        <dbReference type="ChEBI" id="CHEBI:37565"/>
    </ligand>
</feature>
<feature type="binding site" evidence="1">
    <location>
        <begin position="88"/>
        <end position="92"/>
    </location>
    <ligand>
        <name>GTP</name>
        <dbReference type="ChEBI" id="CHEBI:37565"/>
    </ligand>
</feature>
<feature type="binding site" evidence="1">
    <location>
        <begin position="142"/>
        <end position="145"/>
    </location>
    <ligand>
        <name>GTP</name>
        <dbReference type="ChEBI" id="CHEBI:37565"/>
    </ligand>
</feature>